<organism>
    <name type="scientific">Plecturocebus moloch</name>
    <name type="common">Dusky titi monkey</name>
    <name type="synonym">Callicebus moloch</name>
    <dbReference type="NCBI Taxonomy" id="9523"/>
    <lineage>
        <taxon>Eukaryota</taxon>
        <taxon>Metazoa</taxon>
        <taxon>Chordata</taxon>
        <taxon>Craniata</taxon>
        <taxon>Vertebrata</taxon>
        <taxon>Euteleostomi</taxon>
        <taxon>Mammalia</taxon>
        <taxon>Eutheria</taxon>
        <taxon>Euarchontoglires</taxon>
        <taxon>Primates</taxon>
        <taxon>Haplorrhini</taxon>
        <taxon>Platyrrhini</taxon>
        <taxon>Pitheciidae</taxon>
        <taxon>Callicebinae</taxon>
        <taxon>Plecturocebus</taxon>
    </lineage>
</organism>
<feature type="signal peptide" evidence="2">
    <location>
        <begin position="1"/>
        <end position="22"/>
    </location>
</feature>
<feature type="chain" id="PRO_0000420986" description="Proapolipoprotein C-II">
    <location>
        <begin position="23"/>
        <end position="101"/>
    </location>
</feature>
<feature type="chain" id="PRO_0000430835" description="Apolipoprotein C-II" evidence="1">
    <location>
        <begin position="29"/>
        <end position="101"/>
    </location>
</feature>
<feature type="region of interest" description="Lipid binding" evidence="1">
    <location>
        <begin position="66"/>
        <end position="74"/>
    </location>
</feature>
<feature type="region of interest" description="Lipoprotein lipase cofactor" evidence="1">
    <location>
        <begin position="78"/>
        <end position="101"/>
    </location>
</feature>
<name>APOC2_PLEMO</name>
<proteinExistence type="inferred from homology"/>
<reference key="1">
    <citation type="submission" date="2006-07" db="EMBL/GenBank/DDBJ databases">
        <authorList>
            <person name="Cheng J.-F."/>
            <person name="Hamilton M."/>
            <person name="Peng Y."/>
            <person name="Hosseini R."/>
            <person name="Peng Z."/>
            <person name="Malinov I."/>
            <person name="Rubin E.M."/>
        </authorList>
    </citation>
    <scope>NUCLEOTIDE SEQUENCE [LARGE SCALE GENOMIC DNA]</scope>
</reference>
<reference key="2">
    <citation type="unpublished observations" date="2012-11">
        <authorList>
            <person name="Puppione D.L."/>
        </authorList>
    </citation>
    <scope>IDENTIFICATION</scope>
</reference>
<gene>
    <name type="primary">APOC2</name>
</gene>
<protein>
    <recommendedName>
        <fullName>Apolipoprotein C-II</fullName>
        <shortName>Apo-CII</shortName>
        <shortName>ApoC-II</shortName>
    </recommendedName>
    <alternativeName>
        <fullName>Apolipoprotein C2</fullName>
    </alternativeName>
    <component>
        <recommendedName>
            <fullName>Proapolipoprotein C-II</fullName>
            <shortName>ProapoC-II</shortName>
        </recommendedName>
    </component>
</protein>
<sequence>MGTRFLLALFLVLLVLGFEVQGAHLPQQEESAGPALLTQMQESLSSYWDSAKAAASNLYQKTYLPTVDEKLRDMYSKSTAAMSTYAGILTDQVLSMLKGEE</sequence>
<evidence type="ECO:0000250" key="1">
    <source>
        <dbReference type="UniProtKB" id="P02655"/>
    </source>
</evidence>
<evidence type="ECO:0000255" key="2"/>
<evidence type="ECO:0000305" key="3"/>
<keyword id="KW-0162">Chylomicron</keyword>
<keyword id="KW-0325">Glycoprotein</keyword>
<keyword id="KW-0345">HDL</keyword>
<keyword id="KW-0427">LDL</keyword>
<keyword id="KW-0442">Lipid degradation</keyword>
<keyword id="KW-0443">Lipid metabolism</keyword>
<keyword id="KW-0445">Lipid transport</keyword>
<keyword id="KW-0964">Secreted</keyword>
<keyword id="KW-0730">Sialic acid</keyword>
<keyword id="KW-0732">Signal</keyword>
<keyword id="KW-0813">Transport</keyword>
<keyword id="KW-0850">VLDL</keyword>
<accession>P0DKV9</accession>
<dbReference type="EMBL" id="AC146285">
    <property type="status" value="NOT_ANNOTATED_CDS"/>
    <property type="molecule type" value="Genomic_DNA"/>
</dbReference>
<dbReference type="SMR" id="P0DKV9"/>
<dbReference type="GO" id="GO:0042627">
    <property type="term" value="C:chylomicron"/>
    <property type="evidence" value="ECO:0007669"/>
    <property type="project" value="UniProtKB-KW"/>
</dbReference>
<dbReference type="GO" id="GO:0034364">
    <property type="term" value="C:high-density lipoprotein particle"/>
    <property type="evidence" value="ECO:0007669"/>
    <property type="project" value="UniProtKB-KW"/>
</dbReference>
<dbReference type="GO" id="GO:0034362">
    <property type="term" value="C:low-density lipoprotein particle"/>
    <property type="evidence" value="ECO:0007669"/>
    <property type="project" value="UniProtKB-KW"/>
</dbReference>
<dbReference type="GO" id="GO:0034361">
    <property type="term" value="C:very-low-density lipoprotein particle"/>
    <property type="evidence" value="ECO:0007669"/>
    <property type="project" value="UniProtKB-KW"/>
</dbReference>
<dbReference type="GO" id="GO:0016004">
    <property type="term" value="F:phospholipase activator activity"/>
    <property type="evidence" value="ECO:0007669"/>
    <property type="project" value="TreeGrafter"/>
</dbReference>
<dbReference type="GO" id="GO:0043274">
    <property type="term" value="F:phospholipase binding"/>
    <property type="evidence" value="ECO:0007669"/>
    <property type="project" value="TreeGrafter"/>
</dbReference>
<dbReference type="GO" id="GO:0016042">
    <property type="term" value="P:lipid catabolic process"/>
    <property type="evidence" value="ECO:0007669"/>
    <property type="project" value="UniProtKB-KW"/>
</dbReference>
<dbReference type="GO" id="GO:0006869">
    <property type="term" value="P:lipid transport"/>
    <property type="evidence" value="ECO:0007669"/>
    <property type="project" value="UniProtKB-KW"/>
</dbReference>
<dbReference type="GO" id="GO:0060697">
    <property type="term" value="P:positive regulation of phospholipid catabolic process"/>
    <property type="evidence" value="ECO:0007669"/>
    <property type="project" value="TreeGrafter"/>
</dbReference>
<dbReference type="FunFam" id="1.10.1440.10:FF:000001">
    <property type="entry name" value="Apolipoprotein C-II"/>
    <property type="match status" value="1"/>
</dbReference>
<dbReference type="Gene3D" id="1.10.1440.10">
    <property type="entry name" value="Apolipoprotein C-II"/>
    <property type="match status" value="1"/>
</dbReference>
<dbReference type="InterPro" id="IPR008019">
    <property type="entry name" value="Apo-CII"/>
</dbReference>
<dbReference type="InterPro" id="IPR023121">
    <property type="entry name" value="ApoC-II_dom_sf"/>
</dbReference>
<dbReference type="PANTHER" id="PTHR16566">
    <property type="entry name" value="APOLIPOPROTEIN C-II"/>
    <property type="match status" value="1"/>
</dbReference>
<dbReference type="PANTHER" id="PTHR16566:SF0">
    <property type="entry name" value="APOLIPOPROTEIN C-II"/>
    <property type="match status" value="1"/>
</dbReference>
<dbReference type="Pfam" id="PF05355">
    <property type="entry name" value="Apo-CII"/>
    <property type="match status" value="1"/>
</dbReference>
<comment type="function">
    <text evidence="1">Component of chylomicrons, very low-density lipoproteins (VLDL), low-density lipoproteins (LDL), and high-density lipoproteins (HDL) in plasma. Plays an important role in lipoprotein metabolism as an activator of lipoprotein lipase. Both proapolipoprotein C-II and apolipoprotein C-II can activate lipoprotein lipase.</text>
</comment>
<comment type="subcellular location">
    <subcellularLocation>
        <location evidence="1">Secreted</location>
    </subcellularLocation>
</comment>
<comment type="PTM">
    <text evidence="1">Proapolipoprotein C-II is synthesized as a sialic acid containing glycoprotein which is subsequently desialylated prior to its proteolytic processing.</text>
</comment>
<comment type="PTM">
    <text evidence="1">Proapolipoprotein C-II, the major form found in plasma undergoes proteolytic cleavage of its N-terminal hexapeptide to generate apolipoprotein C-II, which occurs as the minor form in plasma.</text>
</comment>
<comment type="similarity">
    <text evidence="3">Belongs to the apolipoprotein C2 family.</text>
</comment>